<gene>
    <name type="primary">Trim63</name>
    <name type="synonym">Murf1</name>
    <name type="synonym">Rf1</name>
</gene>
<comment type="function">
    <text evidence="8 9 10">E3 ubiquitin ligase. Mediates the ubiquitination and subsequent proteasomal degradation of CKM, GMEB1 and HIBADH. Regulates the proteasomal degradation of muscle proteins under amino acid starvation, where muscle protein is catabolized to provide other organs with amino acids. Inhibits de novo skeletal muscle protein synthesis under amino acid starvation. Regulates proteasomal degradation of cardiac troponin I/TNNI3 and probably of other sarcomeric-associated proteins. May play a role in striated muscle atrophy and hypertrophy by regulating an anti-hypertrophic PKC-mediated signaling pathway. May regulate the organization of myofibrils through TTN in muscle cells.</text>
</comment>
<comment type="catalytic activity">
    <reaction>
        <text>S-ubiquitinyl-[E2 ubiquitin-conjugating enzyme]-L-cysteine + [acceptor protein]-L-lysine = [E2 ubiquitin-conjugating enzyme]-L-cysteine + N(6)-ubiquitinyl-[acceptor protein]-L-lysine.</text>
        <dbReference type="EC" id="2.3.2.27"/>
    </reaction>
</comment>
<comment type="pathway">
    <text>Protein modification; protein ubiquitination.</text>
</comment>
<comment type="subunit">
    <text evidence="1 8 9 10">Homodimer. Homooligomer and heterooligomer. Interacts with SUMO2, titin/TTN and GMEB1. Interacts with TRIM54 and probably with TRIM55 (By similarity). Interacts with TNNI3. Forms a ternary complex with RACK1 and PRKCE. Interacts with CKM.</text>
</comment>
<comment type="subcellular location">
    <subcellularLocation>
        <location evidence="9">Cytoplasm</location>
    </subcellularLocation>
    <subcellularLocation>
        <location evidence="9">Nucleus</location>
    </subcellularLocation>
    <subcellularLocation>
        <location evidence="1">Cytoplasm</location>
        <location evidence="1">Myofibril</location>
        <location evidence="1">Sarcomere</location>
        <location evidence="1">M line</location>
    </subcellularLocation>
    <subcellularLocation>
        <location evidence="1">Cytoplasm</location>
        <location evidence="1">Myofibril</location>
        <location evidence="1">Sarcomere</location>
        <location evidence="1">Z line</location>
    </subcellularLocation>
    <text evidence="1">Localizes to the M- and Z-lines in skeletal muscle (By similarity). Colocalizes with TNNI3 in myocytes.</text>
</comment>
<comment type="alternative products">
    <event type="alternative splicing"/>
    <isoform>
        <id>Q38HM4-1</id>
        <name>1</name>
        <sequence type="displayed"/>
    </isoform>
    <isoform>
        <id>Q38HM4-2</id>
        <name>2</name>
        <sequence type="described" ref="VSP_016647 VSP_016648"/>
    </isoform>
</comment>
<comment type="induction">
    <text evidence="7 10">By hydrogen peroxide. Up-regulated in response to amino acid starvation.</text>
</comment>
<comment type="domain">
    <text evidence="1 9">The RING-type zinc finger mediates interaction with SUMO2 and localization to the nucleus (By similarity). Also required for the E3 ubiquitin ligase activity.</text>
</comment>
<comment type="domain">
    <text evidence="1">The B box-type zinc finger mediates homodimerization.</text>
</comment>
<comment type="disruption phenotype">
    <text evidence="10">No visible phenotype under normal conditions. Under amino acid starvation, mice continue to synthesize muscle protein and degrade less muscle protein than wild-type, leading to a decrease in the blood levels of free amino acids. Besides, mutant mice display higher creatine kinase activity under amino acid starvation.</text>
</comment>
<evidence type="ECO:0000250" key="1"/>
<evidence type="ECO:0000255" key="2"/>
<evidence type="ECO:0000255" key="3">
    <source>
        <dbReference type="PROSITE-ProRule" id="PRU00024"/>
    </source>
</evidence>
<evidence type="ECO:0000255" key="4">
    <source>
        <dbReference type="PROSITE-ProRule" id="PRU00175"/>
    </source>
</evidence>
<evidence type="ECO:0000255" key="5">
    <source>
        <dbReference type="PROSITE-ProRule" id="PRU00586"/>
    </source>
</evidence>
<evidence type="ECO:0000256" key="6">
    <source>
        <dbReference type="SAM" id="MobiDB-lite"/>
    </source>
</evidence>
<evidence type="ECO:0000269" key="7">
    <source>
    </source>
</evidence>
<evidence type="ECO:0000269" key="8">
    <source>
    </source>
</evidence>
<evidence type="ECO:0000269" key="9">
    <source>
    </source>
</evidence>
<evidence type="ECO:0000269" key="10">
    <source>
    </source>
</evidence>
<evidence type="ECO:0000303" key="11">
    <source>
    </source>
</evidence>
<evidence type="ECO:0000305" key="12"/>
<protein>
    <recommendedName>
        <fullName>E3 ubiquitin-protein ligase TRIM63</fullName>
        <ecNumber>2.3.2.27</ecNumber>
    </recommendedName>
    <alternativeName>
        <fullName>Muscle-specific RING finger protein 1</fullName>
        <shortName>MuRF-1</shortName>
        <shortName>MuRF1</shortName>
        <shortName>Muscle RING finger protein 1</shortName>
    </alternativeName>
    <alternativeName>
        <fullName evidence="12">RING-type E3 ubiquitin transferase TRIM63</fullName>
    </alternativeName>
    <alternativeName>
        <fullName>Tripartite motif-containing protein 63</fullName>
    </alternativeName>
</protein>
<sequence>MDYKSGLIPDGNAMENLEKQLICPICLEMFTKPVVILPCQHNLCRKCANDIFQAANPYWTNRGGSVSMSGGRFRCPSCRHEVIMDRHGVYGLQRNLLVENIIDIYKQECSSRPLQKGSHPMCKEHEDEKINIYCLTCEVPTCSLCKVFGAHQACEVAPLQSIFQGQKTELSNCISMLVAGNDRVQTIISQLVDSCRVTKENSHQVKEELSQKFDTLYAILDEKKSELLQRITQEQEEKLGFIEALILQYREQLEKSTKLVETAIQSLDEPGGATFLSSAKQLIKSNVEASKGCQLGKTEQGFENMDYFTLDLEHIAEALRAIDFGTDEEEEEFTEEEADEEEGVTTEGHQ</sequence>
<dbReference type="EC" id="2.3.2.27"/>
<dbReference type="EMBL" id="DQ229108">
    <property type="protein sequence ID" value="ABB16283.1"/>
    <property type="molecule type" value="mRNA"/>
</dbReference>
<dbReference type="EMBL" id="AK052911">
    <property type="protein sequence ID" value="BAC35199.1"/>
    <property type="molecule type" value="mRNA"/>
</dbReference>
<dbReference type="SMR" id="Q38HM4"/>
<dbReference type="FunCoup" id="Q38HM4">
    <property type="interactions" value="271"/>
</dbReference>
<dbReference type="IntAct" id="Q38HM4">
    <property type="interactions" value="2"/>
</dbReference>
<dbReference type="STRING" id="10090.ENSMUSP00000101501"/>
<dbReference type="iPTMnet" id="Q38HM4"/>
<dbReference type="PhosphoSitePlus" id="Q38HM4"/>
<dbReference type="PaxDb" id="10090-ENSMUSP00000101501"/>
<dbReference type="ProteomicsDB" id="259324">
    <molecule id="Q38HM4-1"/>
</dbReference>
<dbReference type="ProteomicsDB" id="259325">
    <molecule id="Q38HM4-2"/>
</dbReference>
<dbReference type="UCSC" id="uc008ves.1">
    <molecule id="Q38HM4-2"/>
    <property type="organism name" value="mouse"/>
</dbReference>
<dbReference type="AGR" id="MGI:2447992"/>
<dbReference type="MGI" id="MGI:2447992">
    <property type="gene designation" value="Trim63"/>
</dbReference>
<dbReference type="eggNOG" id="KOG2177">
    <property type="taxonomic scope" value="Eukaryota"/>
</dbReference>
<dbReference type="InParanoid" id="Q38HM4"/>
<dbReference type="Reactome" id="R-MMU-983168">
    <property type="pathway name" value="Antigen processing: Ubiquitination &amp; Proteasome degradation"/>
</dbReference>
<dbReference type="UniPathway" id="UPA00143"/>
<dbReference type="PRO" id="PR:Q38HM4"/>
<dbReference type="Proteomes" id="UP000000589">
    <property type="component" value="Unplaced"/>
</dbReference>
<dbReference type="RNAct" id="Q38HM4">
    <property type="molecule type" value="protein"/>
</dbReference>
<dbReference type="GO" id="GO:0043292">
    <property type="term" value="C:contractile muscle fiber"/>
    <property type="evidence" value="ECO:0000266"/>
    <property type="project" value="MGI"/>
</dbReference>
<dbReference type="GO" id="GO:0080008">
    <property type="term" value="C:Cul4-RING E3 ubiquitin ligase complex"/>
    <property type="evidence" value="ECO:0000314"/>
    <property type="project" value="MGI"/>
</dbReference>
<dbReference type="GO" id="GO:0005829">
    <property type="term" value="C:cytosol"/>
    <property type="evidence" value="ECO:0000304"/>
    <property type="project" value="Reactome"/>
</dbReference>
<dbReference type="GO" id="GO:0031430">
    <property type="term" value="C:M band"/>
    <property type="evidence" value="ECO:0007669"/>
    <property type="project" value="UniProtKB-SubCell"/>
</dbReference>
<dbReference type="GO" id="GO:0005634">
    <property type="term" value="C:nucleus"/>
    <property type="evidence" value="ECO:0007669"/>
    <property type="project" value="UniProtKB-SubCell"/>
</dbReference>
<dbReference type="GO" id="GO:0030018">
    <property type="term" value="C:Z disc"/>
    <property type="evidence" value="ECO:0007669"/>
    <property type="project" value="UniProtKB-SubCell"/>
</dbReference>
<dbReference type="GO" id="GO:0061630">
    <property type="term" value="F:ubiquitin protein ligase activity"/>
    <property type="evidence" value="ECO:0000314"/>
    <property type="project" value="MGI"/>
</dbReference>
<dbReference type="GO" id="GO:0008270">
    <property type="term" value="F:zinc ion binding"/>
    <property type="evidence" value="ECO:0007669"/>
    <property type="project" value="UniProtKB-KW"/>
</dbReference>
<dbReference type="GO" id="GO:0071549">
    <property type="term" value="P:cellular response to dexamethasone stimulus"/>
    <property type="evidence" value="ECO:0000314"/>
    <property type="project" value="MGI"/>
</dbReference>
<dbReference type="GO" id="GO:0006936">
    <property type="term" value="P:muscle contraction"/>
    <property type="evidence" value="ECO:0000266"/>
    <property type="project" value="MGI"/>
</dbReference>
<dbReference type="GO" id="GO:0014904">
    <property type="term" value="P:myotube cell development"/>
    <property type="evidence" value="ECO:0000315"/>
    <property type="project" value="MGI"/>
</dbReference>
<dbReference type="GO" id="GO:0043161">
    <property type="term" value="P:proteasome-mediated ubiquitin-dependent protein catabolic process"/>
    <property type="evidence" value="ECO:0000314"/>
    <property type="project" value="MGI"/>
</dbReference>
<dbReference type="GO" id="GO:0006513">
    <property type="term" value="P:protein monoubiquitination"/>
    <property type="evidence" value="ECO:0000314"/>
    <property type="project" value="CACAO"/>
</dbReference>
<dbReference type="GO" id="GO:0010468">
    <property type="term" value="P:regulation of gene expression"/>
    <property type="evidence" value="ECO:0000315"/>
    <property type="project" value="MGI"/>
</dbReference>
<dbReference type="GO" id="GO:0014894">
    <property type="term" value="P:response to denervation involved in regulation of muscle adaptation"/>
    <property type="evidence" value="ECO:0000314"/>
    <property type="project" value="UniProtKB"/>
</dbReference>
<dbReference type="GO" id="GO:0014878">
    <property type="term" value="P:response to electrical stimulus involved in regulation of muscle adaptation"/>
    <property type="evidence" value="ECO:0000250"/>
    <property type="project" value="UniProtKB"/>
</dbReference>
<dbReference type="CDD" id="cd19831">
    <property type="entry name" value="Bbox2_MuRF1_C-II"/>
    <property type="match status" value="1"/>
</dbReference>
<dbReference type="CDD" id="cd16759">
    <property type="entry name" value="RING-HC_MuRF1"/>
    <property type="match status" value="1"/>
</dbReference>
<dbReference type="FunFam" id="3.30.40.10:FF:000014">
    <property type="entry name" value="probable E3 ubiquitin-protein ligase MID2"/>
    <property type="match status" value="1"/>
</dbReference>
<dbReference type="FunFam" id="1.20.5.170:FF:000022">
    <property type="entry name" value="Tripartite motif containing 55"/>
    <property type="match status" value="1"/>
</dbReference>
<dbReference type="FunFam" id="3.30.160.60:FF:000140">
    <property type="entry name" value="Tripartite motif containing 55"/>
    <property type="match status" value="1"/>
</dbReference>
<dbReference type="Gene3D" id="1.20.5.170">
    <property type="match status" value="1"/>
</dbReference>
<dbReference type="Gene3D" id="3.30.160.60">
    <property type="entry name" value="Classic Zinc Finger"/>
    <property type="match status" value="1"/>
</dbReference>
<dbReference type="Gene3D" id="3.30.40.10">
    <property type="entry name" value="Zinc/RING finger domain, C3HC4 (zinc finger)"/>
    <property type="match status" value="1"/>
</dbReference>
<dbReference type="InterPro" id="IPR017903">
    <property type="entry name" value="COS_domain"/>
</dbReference>
<dbReference type="InterPro" id="IPR050143">
    <property type="entry name" value="TRIM/RBCC"/>
</dbReference>
<dbReference type="InterPro" id="IPR042667">
    <property type="entry name" value="TRIM63_RING-HC"/>
</dbReference>
<dbReference type="InterPro" id="IPR027370">
    <property type="entry name" value="Znf-RING_euk"/>
</dbReference>
<dbReference type="InterPro" id="IPR000315">
    <property type="entry name" value="Znf_B-box"/>
</dbReference>
<dbReference type="InterPro" id="IPR001841">
    <property type="entry name" value="Znf_RING"/>
</dbReference>
<dbReference type="InterPro" id="IPR013083">
    <property type="entry name" value="Znf_RING/FYVE/PHD"/>
</dbReference>
<dbReference type="InterPro" id="IPR017907">
    <property type="entry name" value="Znf_RING_CS"/>
</dbReference>
<dbReference type="PANTHER" id="PTHR24103">
    <property type="entry name" value="E3 UBIQUITIN-PROTEIN LIGASE TRIM"/>
    <property type="match status" value="1"/>
</dbReference>
<dbReference type="Pfam" id="PF00643">
    <property type="entry name" value="zf-B_box"/>
    <property type="match status" value="1"/>
</dbReference>
<dbReference type="Pfam" id="PF13445">
    <property type="entry name" value="zf-RING_UBOX"/>
    <property type="match status" value="1"/>
</dbReference>
<dbReference type="SMART" id="SM00336">
    <property type="entry name" value="BBOX"/>
    <property type="match status" value="1"/>
</dbReference>
<dbReference type="SMART" id="SM00184">
    <property type="entry name" value="RING"/>
    <property type="match status" value="1"/>
</dbReference>
<dbReference type="SUPFAM" id="SSF57845">
    <property type="entry name" value="B-box zinc-binding domain"/>
    <property type="match status" value="1"/>
</dbReference>
<dbReference type="SUPFAM" id="SSF57850">
    <property type="entry name" value="RING/U-box"/>
    <property type="match status" value="1"/>
</dbReference>
<dbReference type="PROSITE" id="PS51262">
    <property type="entry name" value="COS"/>
    <property type="match status" value="1"/>
</dbReference>
<dbReference type="PROSITE" id="PS50119">
    <property type="entry name" value="ZF_BBOX"/>
    <property type="match status" value="1"/>
</dbReference>
<dbReference type="PROSITE" id="PS00518">
    <property type="entry name" value="ZF_RING_1"/>
    <property type="match status" value="1"/>
</dbReference>
<dbReference type="PROSITE" id="PS50089">
    <property type="entry name" value="ZF_RING_2"/>
    <property type="match status" value="1"/>
</dbReference>
<organism>
    <name type="scientific">Mus musculus</name>
    <name type="common">Mouse</name>
    <dbReference type="NCBI Taxonomy" id="10090"/>
    <lineage>
        <taxon>Eukaryota</taxon>
        <taxon>Metazoa</taxon>
        <taxon>Chordata</taxon>
        <taxon>Craniata</taxon>
        <taxon>Vertebrata</taxon>
        <taxon>Euteleostomi</taxon>
        <taxon>Mammalia</taxon>
        <taxon>Eutheria</taxon>
        <taxon>Euarchontoglires</taxon>
        <taxon>Glires</taxon>
        <taxon>Rodentia</taxon>
        <taxon>Myomorpha</taxon>
        <taxon>Muroidea</taxon>
        <taxon>Muridae</taxon>
        <taxon>Murinae</taxon>
        <taxon>Mus</taxon>
        <taxon>Mus</taxon>
    </lineage>
</organism>
<reference key="1">
    <citation type="journal article" date="2004" name="Proc. Natl. Acad. Sci. U.S.A.">
        <title>Muscle-specific RING finger 1 is a bona fide ubiquitin ligase that degrades cardiac troponin I.</title>
        <authorList>
            <person name="Kedar V."/>
            <person name="McDonough H."/>
            <person name="Arya R."/>
            <person name="Li H.-H."/>
            <person name="Rockman H.A."/>
            <person name="Patterson C."/>
        </authorList>
    </citation>
    <scope>NUCLEOTIDE SEQUENCE [MRNA] (ISOFORM 1)</scope>
    <scope>FUNCTION AS AN E3 UBIQUITIN LIGASE</scope>
    <scope>INTERACTION WITH TNNI3</scope>
    <scope>DOMAIN</scope>
    <scope>SUBCELLULAR LOCATION</scope>
    <source>
        <strain>C57BL/6J</strain>
    </source>
</reference>
<reference key="2">
    <citation type="journal article" date="2005" name="Science">
        <title>The transcriptional landscape of the mammalian genome.</title>
        <authorList>
            <person name="Carninci P."/>
            <person name="Kasukawa T."/>
            <person name="Katayama S."/>
            <person name="Gough J."/>
            <person name="Frith M.C."/>
            <person name="Maeda N."/>
            <person name="Oyama R."/>
            <person name="Ravasi T."/>
            <person name="Lenhard B."/>
            <person name="Wells C."/>
            <person name="Kodzius R."/>
            <person name="Shimokawa K."/>
            <person name="Bajic V.B."/>
            <person name="Brenner S.E."/>
            <person name="Batalov S."/>
            <person name="Forrest A.R."/>
            <person name="Zavolan M."/>
            <person name="Davis M.J."/>
            <person name="Wilming L.G."/>
            <person name="Aidinis V."/>
            <person name="Allen J.E."/>
            <person name="Ambesi-Impiombato A."/>
            <person name="Apweiler R."/>
            <person name="Aturaliya R.N."/>
            <person name="Bailey T.L."/>
            <person name="Bansal M."/>
            <person name="Baxter L."/>
            <person name="Beisel K.W."/>
            <person name="Bersano T."/>
            <person name="Bono H."/>
            <person name="Chalk A.M."/>
            <person name="Chiu K.P."/>
            <person name="Choudhary V."/>
            <person name="Christoffels A."/>
            <person name="Clutterbuck D.R."/>
            <person name="Crowe M.L."/>
            <person name="Dalla E."/>
            <person name="Dalrymple B.P."/>
            <person name="de Bono B."/>
            <person name="Della Gatta G."/>
            <person name="di Bernardo D."/>
            <person name="Down T."/>
            <person name="Engstrom P."/>
            <person name="Fagiolini M."/>
            <person name="Faulkner G."/>
            <person name="Fletcher C.F."/>
            <person name="Fukushima T."/>
            <person name="Furuno M."/>
            <person name="Futaki S."/>
            <person name="Gariboldi M."/>
            <person name="Georgii-Hemming P."/>
            <person name="Gingeras T.R."/>
            <person name="Gojobori T."/>
            <person name="Green R.E."/>
            <person name="Gustincich S."/>
            <person name="Harbers M."/>
            <person name="Hayashi Y."/>
            <person name="Hensch T.K."/>
            <person name="Hirokawa N."/>
            <person name="Hill D."/>
            <person name="Huminiecki L."/>
            <person name="Iacono M."/>
            <person name="Ikeo K."/>
            <person name="Iwama A."/>
            <person name="Ishikawa T."/>
            <person name="Jakt M."/>
            <person name="Kanapin A."/>
            <person name="Katoh M."/>
            <person name="Kawasawa Y."/>
            <person name="Kelso J."/>
            <person name="Kitamura H."/>
            <person name="Kitano H."/>
            <person name="Kollias G."/>
            <person name="Krishnan S.P."/>
            <person name="Kruger A."/>
            <person name="Kummerfeld S.K."/>
            <person name="Kurochkin I.V."/>
            <person name="Lareau L.F."/>
            <person name="Lazarevic D."/>
            <person name="Lipovich L."/>
            <person name="Liu J."/>
            <person name="Liuni S."/>
            <person name="McWilliam S."/>
            <person name="Madan Babu M."/>
            <person name="Madera M."/>
            <person name="Marchionni L."/>
            <person name="Matsuda H."/>
            <person name="Matsuzawa S."/>
            <person name="Miki H."/>
            <person name="Mignone F."/>
            <person name="Miyake S."/>
            <person name="Morris K."/>
            <person name="Mottagui-Tabar S."/>
            <person name="Mulder N."/>
            <person name="Nakano N."/>
            <person name="Nakauchi H."/>
            <person name="Ng P."/>
            <person name="Nilsson R."/>
            <person name="Nishiguchi S."/>
            <person name="Nishikawa S."/>
            <person name="Nori F."/>
            <person name="Ohara O."/>
            <person name="Okazaki Y."/>
            <person name="Orlando V."/>
            <person name="Pang K.C."/>
            <person name="Pavan W.J."/>
            <person name="Pavesi G."/>
            <person name="Pesole G."/>
            <person name="Petrovsky N."/>
            <person name="Piazza S."/>
            <person name="Reed J."/>
            <person name="Reid J.F."/>
            <person name="Ring B.Z."/>
            <person name="Ringwald M."/>
            <person name="Rost B."/>
            <person name="Ruan Y."/>
            <person name="Salzberg S.L."/>
            <person name="Sandelin A."/>
            <person name="Schneider C."/>
            <person name="Schoenbach C."/>
            <person name="Sekiguchi K."/>
            <person name="Semple C.A."/>
            <person name="Seno S."/>
            <person name="Sessa L."/>
            <person name="Sheng Y."/>
            <person name="Shibata Y."/>
            <person name="Shimada H."/>
            <person name="Shimada K."/>
            <person name="Silva D."/>
            <person name="Sinclair B."/>
            <person name="Sperling S."/>
            <person name="Stupka E."/>
            <person name="Sugiura K."/>
            <person name="Sultana R."/>
            <person name="Takenaka Y."/>
            <person name="Taki K."/>
            <person name="Tammoja K."/>
            <person name="Tan S.L."/>
            <person name="Tang S."/>
            <person name="Taylor M.S."/>
            <person name="Tegner J."/>
            <person name="Teichmann S.A."/>
            <person name="Ueda H.R."/>
            <person name="van Nimwegen E."/>
            <person name="Verardo R."/>
            <person name="Wei C.L."/>
            <person name="Yagi K."/>
            <person name="Yamanishi H."/>
            <person name="Zabarovsky E."/>
            <person name="Zhu S."/>
            <person name="Zimmer A."/>
            <person name="Hide W."/>
            <person name="Bult C."/>
            <person name="Grimmond S.M."/>
            <person name="Teasdale R.D."/>
            <person name="Liu E.T."/>
            <person name="Brusic V."/>
            <person name="Quackenbush J."/>
            <person name="Wahlestedt C."/>
            <person name="Mattick J.S."/>
            <person name="Hume D.A."/>
            <person name="Kai C."/>
            <person name="Sasaki D."/>
            <person name="Tomaru Y."/>
            <person name="Fukuda S."/>
            <person name="Kanamori-Katayama M."/>
            <person name="Suzuki M."/>
            <person name="Aoki J."/>
            <person name="Arakawa T."/>
            <person name="Iida J."/>
            <person name="Imamura K."/>
            <person name="Itoh M."/>
            <person name="Kato T."/>
            <person name="Kawaji H."/>
            <person name="Kawagashira N."/>
            <person name="Kawashima T."/>
            <person name="Kojima M."/>
            <person name="Kondo S."/>
            <person name="Konno H."/>
            <person name="Nakano K."/>
            <person name="Ninomiya N."/>
            <person name="Nishio T."/>
            <person name="Okada M."/>
            <person name="Plessy C."/>
            <person name="Shibata K."/>
            <person name="Shiraki T."/>
            <person name="Suzuki S."/>
            <person name="Tagami M."/>
            <person name="Waki K."/>
            <person name="Watahiki A."/>
            <person name="Okamura-Oho Y."/>
            <person name="Suzuki H."/>
            <person name="Kawai J."/>
            <person name="Hayashizaki Y."/>
        </authorList>
    </citation>
    <scope>NUCLEOTIDE SEQUENCE [LARGE SCALE MRNA] (ISOFORM 2)</scope>
    <source>
        <strain>C57BL/6J</strain>
        <tissue>Heart</tissue>
    </source>
</reference>
<reference key="3">
    <citation type="submission" date="2009-01" db="UniProtKB">
        <authorList>
            <person name="Lubec G."/>
            <person name="Sunyer B."/>
            <person name="Chen W.-Q."/>
        </authorList>
    </citation>
    <scope>PROTEIN SEQUENCE OF 197-212</scope>
    <scope>IDENTIFICATION BY MASS SPECTROMETRY</scope>
    <source>
        <strain>OF1</strain>
        <tissue>Hippocampus</tissue>
    </source>
</reference>
<reference key="4">
    <citation type="journal article" date="2003" name="Am. J. Physiol.">
        <title>Hydrogen peroxide stimulates ubiquitin-conjugating activity and expression of genes for specific E2 and E3 proteins in skeletal muscle myotubes.</title>
        <authorList>
            <person name="Li Y.-P."/>
            <person name="Chen Y."/>
            <person name="Li A.S."/>
            <person name="Reid M.B."/>
        </authorList>
    </citation>
    <scope>INDUCTION</scope>
</reference>
<reference key="5">
    <citation type="journal article" date="2004" name="J. Cell Biol.">
        <title>Muscle ring finger protein-1 inhibits PKC-epsilon activation and prevents cardiomyocyte hypertrophy.</title>
        <authorList>
            <person name="Arya R."/>
            <person name="Kedar V."/>
            <person name="Hwang J.R."/>
            <person name="McDonough H."/>
            <person name="Li H.-H."/>
            <person name="Taylor J."/>
            <person name="Patterson C."/>
        </authorList>
    </citation>
    <scope>FUNCTION</scope>
    <scope>INTERACTION WITH RACK1 AND PRKCE</scope>
</reference>
<reference key="6">
    <citation type="journal article" date="2008" name="J. Mol. Biol.">
        <title>Muscle RING-finger protein-1 (MuRF1) as a connector of muscle energy metabolism and protein synthesis.</title>
        <authorList>
            <person name="Koyama S."/>
            <person name="Hata S."/>
            <person name="Witt C.C."/>
            <person name="Ono Y."/>
            <person name="Lerche S."/>
            <person name="Ojima K."/>
            <person name="Chiba T."/>
            <person name="Doi N."/>
            <person name="Kitamura F."/>
            <person name="Tanaka K."/>
            <person name="Abe K."/>
            <person name="Witt S.H."/>
            <person name="Rybin V."/>
            <person name="Gasch A."/>
            <person name="Franz T."/>
            <person name="Labeit S."/>
            <person name="Sorimachi H."/>
        </authorList>
    </citation>
    <scope>DISRUPTION PHENOTYPE</scope>
    <scope>FUNCTION</scope>
    <scope>INTERACTION WITH CKM</scope>
    <scope>INDUCTION</scope>
</reference>
<feature type="chain" id="PRO_0000056291" description="E3 ubiquitin-protein ligase TRIM63">
    <location>
        <begin position="1"/>
        <end position="350"/>
    </location>
</feature>
<feature type="domain" description="COS" evidence="5">
    <location>
        <begin position="267"/>
        <end position="325"/>
    </location>
</feature>
<feature type="zinc finger region" description="RING-type" evidence="4">
    <location>
        <begin position="23"/>
        <end position="79"/>
    </location>
</feature>
<feature type="zinc finger region" description="B box-type" evidence="3">
    <location>
        <begin position="117"/>
        <end position="159"/>
    </location>
</feature>
<feature type="region of interest" description="Interaction with TTN" evidence="1">
    <location>
        <begin position="74"/>
        <end position="218"/>
    </location>
</feature>
<feature type="region of interest" description="Disordered" evidence="6">
    <location>
        <begin position="325"/>
        <end position="350"/>
    </location>
</feature>
<feature type="coiled-coil region" evidence="2">
    <location>
        <begin position="207"/>
        <end position="269"/>
    </location>
</feature>
<feature type="compositionally biased region" description="Acidic residues" evidence="6">
    <location>
        <begin position="325"/>
        <end position="344"/>
    </location>
</feature>
<feature type="binding site" evidence="3">
    <location>
        <position position="122"/>
    </location>
    <ligand>
        <name>Zn(2+)</name>
        <dbReference type="ChEBI" id="CHEBI:29105"/>
    </ligand>
</feature>
<feature type="binding site" evidence="3">
    <location>
        <position position="125"/>
    </location>
    <ligand>
        <name>Zn(2+)</name>
        <dbReference type="ChEBI" id="CHEBI:29105"/>
    </ligand>
</feature>
<feature type="binding site" evidence="3">
    <location>
        <position position="145"/>
    </location>
    <ligand>
        <name>Zn(2+)</name>
        <dbReference type="ChEBI" id="CHEBI:29105"/>
    </ligand>
</feature>
<feature type="binding site" evidence="3">
    <location>
        <position position="151"/>
    </location>
    <ligand>
        <name>Zn(2+)</name>
        <dbReference type="ChEBI" id="CHEBI:29105"/>
    </ligand>
</feature>
<feature type="splice variant" id="VSP_016647" description="In isoform 2." evidence="11">
    <original>SRPLQKGSHPMCKEHEDEKINIYCLTCEVPTCSLCKVFGAH</original>
    <variation>RSVCSRTAPPLPQAPPTSRSLQLLSPAQRASTLYRRQNLSS</variation>
    <location>
        <begin position="111"/>
        <end position="151"/>
    </location>
</feature>
<feature type="splice variant" id="VSP_016648" description="In isoform 2." evidence="11">
    <location>
        <begin position="152"/>
        <end position="350"/>
    </location>
</feature>
<feature type="sequence conflict" description="In Ref. 2; BAC35199." evidence="12" ref="2">
    <original>G</original>
    <variation>S</variation>
    <location>
        <position position="6"/>
    </location>
</feature>
<feature type="sequence conflict" description="In Ref. 2; BAC35199." evidence="12" ref="2">
    <original>N</original>
    <variation>D</variation>
    <location>
        <position position="42"/>
    </location>
</feature>
<accession>Q38HM4</accession>
<accession>Q8BWC4</accession>
<proteinExistence type="evidence at protein level"/>
<keyword id="KW-0025">Alternative splicing</keyword>
<keyword id="KW-0175">Coiled coil</keyword>
<keyword id="KW-0963">Cytoplasm</keyword>
<keyword id="KW-0903">Direct protein sequencing</keyword>
<keyword id="KW-0479">Metal-binding</keyword>
<keyword id="KW-0514">Muscle protein</keyword>
<keyword id="KW-0539">Nucleus</keyword>
<keyword id="KW-1185">Reference proteome</keyword>
<keyword id="KW-0808">Transferase</keyword>
<keyword id="KW-0833">Ubl conjugation pathway</keyword>
<keyword id="KW-0862">Zinc</keyword>
<keyword id="KW-0863">Zinc-finger</keyword>
<name>TRI63_MOUSE</name>